<evidence type="ECO:0000250" key="1">
    <source>
        <dbReference type="UniProtKB" id="O43309"/>
    </source>
</evidence>
<evidence type="ECO:0000255" key="2">
    <source>
        <dbReference type="PROSITE-ProRule" id="PRU00042"/>
    </source>
</evidence>
<evidence type="ECO:0000255" key="3">
    <source>
        <dbReference type="PROSITE-ProRule" id="PRU00187"/>
    </source>
</evidence>
<evidence type="ECO:0000256" key="4">
    <source>
        <dbReference type="SAM" id="MobiDB-lite"/>
    </source>
</evidence>
<evidence type="ECO:0000305" key="5"/>
<gene>
    <name type="primary">ZSCAN12</name>
    <name type="synonym">ZNF96</name>
</gene>
<accession>A2T6V8</accession>
<reference key="1">
    <citation type="submission" date="2006-08" db="EMBL/GenBank/DDBJ databases">
        <title>Positive selection in transcription factor genes on the human lineage.</title>
        <authorList>
            <person name="Nickel G.C."/>
            <person name="Tefft D.L."/>
            <person name="Trevarthen K."/>
            <person name="Funt J."/>
            <person name="Adams M.D."/>
        </authorList>
    </citation>
    <scope>NUCLEOTIDE SEQUENCE [GENOMIC DNA]</scope>
</reference>
<protein>
    <recommendedName>
        <fullName>Zinc finger and SCAN domain-containing protein 12</fullName>
    </recommendedName>
    <alternativeName>
        <fullName>Zinc finger protein 96</fullName>
    </alternativeName>
</protein>
<name>ZSC12_PANTR</name>
<proteinExistence type="inferred from homology"/>
<organism>
    <name type="scientific">Pan troglodytes</name>
    <name type="common">Chimpanzee</name>
    <dbReference type="NCBI Taxonomy" id="9598"/>
    <lineage>
        <taxon>Eukaryota</taxon>
        <taxon>Metazoa</taxon>
        <taxon>Chordata</taxon>
        <taxon>Craniata</taxon>
        <taxon>Vertebrata</taxon>
        <taxon>Euteleostomi</taxon>
        <taxon>Mammalia</taxon>
        <taxon>Eutheria</taxon>
        <taxon>Euarchontoglires</taxon>
        <taxon>Primates</taxon>
        <taxon>Haplorrhini</taxon>
        <taxon>Catarrhini</taxon>
        <taxon>Hominidae</taxon>
        <taxon>Pan</taxon>
    </lineage>
</organism>
<comment type="function">
    <text>May be involved in transcriptional regulation.</text>
</comment>
<comment type="subcellular location">
    <subcellularLocation>
        <location evidence="3">Nucleus</location>
    </subcellularLocation>
</comment>
<comment type="similarity">
    <text evidence="5">Belongs to the krueppel C2H2-type zinc-finger protein family.</text>
</comment>
<feature type="chain" id="PRO_0000285485" description="Zinc finger and SCAN domain-containing protein 12">
    <location>
        <begin position="1"/>
        <end position="604"/>
    </location>
</feature>
<feature type="domain" description="SCAN box" evidence="3">
    <location>
        <begin position="46"/>
        <end position="128"/>
    </location>
</feature>
<feature type="zinc finger region" description="C2H2-type 1" evidence="2">
    <location>
        <begin position="274"/>
        <end position="296"/>
    </location>
</feature>
<feature type="zinc finger region" description="C2H2-type 2" evidence="2">
    <location>
        <begin position="302"/>
        <end position="324"/>
    </location>
</feature>
<feature type="zinc finger region" description="C2H2-type 3" evidence="2">
    <location>
        <begin position="330"/>
        <end position="352"/>
    </location>
</feature>
<feature type="zinc finger region" description="C2H2-type 4" evidence="2">
    <location>
        <begin position="358"/>
        <end position="380"/>
    </location>
</feature>
<feature type="zinc finger region" description="C2H2-type 5" evidence="2">
    <location>
        <begin position="386"/>
        <end position="408"/>
    </location>
</feature>
<feature type="zinc finger region" description="C2H2-type 6" evidence="2">
    <location>
        <begin position="414"/>
        <end position="436"/>
    </location>
</feature>
<feature type="zinc finger region" description="C2H2-type 7" evidence="2">
    <location>
        <begin position="442"/>
        <end position="463"/>
    </location>
</feature>
<feature type="zinc finger region" description="C2H2-type 8" evidence="2">
    <location>
        <begin position="469"/>
        <end position="491"/>
    </location>
</feature>
<feature type="zinc finger region" description="C2H2-type 9" evidence="2">
    <location>
        <begin position="497"/>
        <end position="519"/>
    </location>
</feature>
<feature type="zinc finger region" description="C2H2-type 10" evidence="2">
    <location>
        <begin position="525"/>
        <end position="547"/>
    </location>
</feature>
<feature type="zinc finger region" description="C2H2-type 11; degenerate" evidence="2">
    <location>
        <begin position="553"/>
        <end position="578"/>
    </location>
</feature>
<feature type="region of interest" description="Disordered" evidence="4">
    <location>
        <begin position="154"/>
        <end position="175"/>
    </location>
</feature>
<feature type="region of interest" description="Disordered" evidence="4">
    <location>
        <begin position="224"/>
        <end position="264"/>
    </location>
</feature>
<feature type="cross-link" description="Glycyl lysine isopeptide (Lys-Gly) (interchain with G-Cter in SUMO2)" evidence="1">
    <location>
        <position position="20"/>
    </location>
</feature>
<feature type="cross-link" description="Glycyl lysine isopeptide (Lys-Gly) (interchain with G-Cter in SUMO2)" evidence="1">
    <location>
        <position position="25"/>
    </location>
</feature>
<feature type="cross-link" description="Glycyl lysine isopeptide (Lys-Gly) (interchain with G-Cter in SUMO2)" evidence="1">
    <location>
        <position position="196"/>
    </location>
</feature>
<keyword id="KW-0238">DNA-binding</keyword>
<keyword id="KW-1017">Isopeptide bond</keyword>
<keyword id="KW-0479">Metal-binding</keyword>
<keyword id="KW-0539">Nucleus</keyword>
<keyword id="KW-1185">Reference proteome</keyword>
<keyword id="KW-0677">Repeat</keyword>
<keyword id="KW-0804">Transcription</keyword>
<keyword id="KW-0805">Transcription regulation</keyword>
<keyword id="KW-0832">Ubl conjugation</keyword>
<keyword id="KW-0862">Zinc</keyword>
<keyword id="KW-0863">Zinc-finger</keyword>
<dbReference type="EMBL" id="DQ977314">
    <property type="protein sequence ID" value="ABM91913.1"/>
    <property type="molecule type" value="Genomic_DNA"/>
</dbReference>
<dbReference type="STRING" id="9598.ENSPTRP00000071736"/>
<dbReference type="PaxDb" id="9598-ENSPTRP00000054643"/>
<dbReference type="eggNOG" id="KOG1721">
    <property type="taxonomic scope" value="Eukaryota"/>
</dbReference>
<dbReference type="InParanoid" id="A2T6V8"/>
<dbReference type="Proteomes" id="UP000002277">
    <property type="component" value="Unplaced"/>
</dbReference>
<dbReference type="GO" id="GO:0005634">
    <property type="term" value="C:nucleus"/>
    <property type="evidence" value="ECO:0007669"/>
    <property type="project" value="UniProtKB-SubCell"/>
</dbReference>
<dbReference type="GO" id="GO:0000981">
    <property type="term" value="F:DNA-binding transcription factor activity, RNA polymerase II-specific"/>
    <property type="evidence" value="ECO:0000318"/>
    <property type="project" value="GO_Central"/>
</dbReference>
<dbReference type="GO" id="GO:0000978">
    <property type="term" value="F:RNA polymerase II cis-regulatory region sequence-specific DNA binding"/>
    <property type="evidence" value="ECO:0000318"/>
    <property type="project" value="GO_Central"/>
</dbReference>
<dbReference type="GO" id="GO:0008270">
    <property type="term" value="F:zinc ion binding"/>
    <property type="evidence" value="ECO:0007669"/>
    <property type="project" value="UniProtKB-KW"/>
</dbReference>
<dbReference type="GO" id="GO:0006357">
    <property type="term" value="P:regulation of transcription by RNA polymerase II"/>
    <property type="evidence" value="ECO:0000318"/>
    <property type="project" value="GO_Central"/>
</dbReference>
<dbReference type="CDD" id="cd07936">
    <property type="entry name" value="SCAN"/>
    <property type="match status" value="1"/>
</dbReference>
<dbReference type="FunFam" id="3.30.160.60:FF:000056">
    <property type="entry name" value="Zinc finger and SCAN domain-containing 20"/>
    <property type="match status" value="2"/>
</dbReference>
<dbReference type="FunFam" id="3.30.160.60:FF:001087">
    <property type="entry name" value="Zinc finger and SCAN domain-containing protein 26"/>
    <property type="match status" value="1"/>
</dbReference>
<dbReference type="FunFam" id="3.30.160.60:FF:000144">
    <property type="entry name" value="zinc finger protein 181 isoform X1"/>
    <property type="match status" value="1"/>
</dbReference>
<dbReference type="FunFam" id="1.10.4020.10:FF:000001">
    <property type="entry name" value="zinc finger protein 263 isoform X1"/>
    <property type="match status" value="1"/>
</dbReference>
<dbReference type="FunFam" id="3.30.160.60:FF:000970">
    <property type="entry name" value="zinc finger protein 333 isoform X2"/>
    <property type="match status" value="1"/>
</dbReference>
<dbReference type="FunFam" id="3.30.160.60:FF:002343">
    <property type="entry name" value="Zinc finger protein 33A"/>
    <property type="match status" value="1"/>
</dbReference>
<dbReference type="FunFam" id="3.30.160.60:FF:000016">
    <property type="entry name" value="zinc finger protein 37 homolog"/>
    <property type="match status" value="1"/>
</dbReference>
<dbReference type="FunFam" id="3.30.160.60:FF:001882">
    <property type="entry name" value="Zinc finger protein 473"/>
    <property type="match status" value="1"/>
</dbReference>
<dbReference type="FunFam" id="3.30.160.60:FF:000070">
    <property type="entry name" value="zinc finger protein 689 isoform X1"/>
    <property type="match status" value="1"/>
</dbReference>
<dbReference type="FunFam" id="3.30.160.60:FF:000176">
    <property type="entry name" value="zinc finger protein 70"/>
    <property type="match status" value="1"/>
</dbReference>
<dbReference type="FunFam" id="3.30.160.60:FF:000330">
    <property type="entry name" value="Zinc finger with KRAB and SCAN domains 1"/>
    <property type="match status" value="1"/>
</dbReference>
<dbReference type="Gene3D" id="3.30.160.60">
    <property type="entry name" value="Classic Zinc Finger"/>
    <property type="match status" value="11"/>
</dbReference>
<dbReference type="Gene3D" id="1.10.4020.10">
    <property type="entry name" value="DNA breaking-rejoining enzymes"/>
    <property type="match status" value="1"/>
</dbReference>
<dbReference type="InterPro" id="IPR003309">
    <property type="entry name" value="SCAN_dom"/>
</dbReference>
<dbReference type="InterPro" id="IPR038269">
    <property type="entry name" value="SCAN_sf"/>
</dbReference>
<dbReference type="InterPro" id="IPR036236">
    <property type="entry name" value="Znf_C2H2_sf"/>
</dbReference>
<dbReference type="InterPro" id="IPR013087">
    <property type="entry name" value="Znf_C2H2_type"/>
</dbReference>
<dbReference type="PANTHER" id="PTHR23226">
    <property type="entry name" value="ZINC FINGER AND SCAN DOMAIN-CONTAINING"/>
    <property type="match status" value="1"/>
</dbReference>
<dbReference type="PANTHER" id="PTHR23226:SF76">
    <property type="entry name" value="ZINC FINGER AND SCAN DOMAIN-CONTAINING PROTEIN 23"/>
    <property type="match status" value="1"/>
</dbReference>
<dbReference type="Pfam" id="PF02023">
    <property type="entry name" value="SCAN"/>
    <property type="match status" value="1"/>
</dbReference>
<dbReference type="Pfam" id="PF00096">
    <property type="entry name" value="zf-C2H2"/>
    <property type="match status" value="10"/>
</dbReference>
<dbReference type="SMART" id="SM00431">
    <property type="entry name" value="SCAN"/>
    <property type="match status" value="1"/>
</dbReference>
<dbReference type="SMART" id="SM00355">
    <property type="entry name" value="ZnF_C2H2"/>
    <property type="match status" value="10"/>
</dbReference>
<dbReference type="SUPFAM" id="SSF57667">
    <property type="entry name" value="beta-beta-alpha zinc fingers"/>
    <property type="match status" value="6"/>
</dbReference>
<dbReference type="SUPFAM" id="SSF47353">
    <property type="entry name" value="Retrovirus capsid dimerization domain-like"/>
    <property type="match status" value="1"/>
</dbReference>
<dbReference type="PROSITE" id="PS50804">
    <property type="entry name" value="SCAN_BOX"/>
    <property type="match status" value="1"/>
</dbReference>
<dbReference type="PROSITE" id="PS00028">
    <property type="entry name" value="ZINC_FINGER_C2H2_1"/>
    <property type="match status" value="9"/>
</dbReference>
<dbReference type="PROSITE" id="PS50157">
    <property type="entry name" value="ZINC_FINGER_C2H2_2"/>
    <property type="match status" value="11"/>
</dbReference>
<sequence>MASTWAIQAHMDQDEPLEVKIEEEKYTTRQDWDLRKNNTHSREVFRQYFRQFCYQETSGPREALSRLRELCHQWLRPETHTKEQILELLVLEQFLTILPEELQAWVQEQHPESGEEVVTVLEDLERELDEPGEQVSAHTGEQEMFLQETVRLRKEGEPSMSLQSMKAQPKYESPELESQQEQVLDVETGNEYGNLKQEVSEEMEPHGNTSSKFENDMSKXARCGETREPEEITEEPSACSREDKQPTCDENGVSLTENSDHTEHQRICPGEESYGCDDCGKTFSQHSHLIEHQRIHTGDRPYRCEECGKAFRGRTVLIRHKIIHTGEKPYKCNECGKAFGRWSALNQHQRLHTGEKHYHCNDCGKAFSQKAGLFHHIKIHTRDKPYQCTHCNKSFSRRSILTQHQGVHTGAKPYECNECGKAFVYNSSLVSHQEIHHKEKCYQCKECGKSFSQSGLIQHQRIHTGEKPYKCDVCEKAFIQRTSLTEHQRIHTGERPYKCDKCGKAFTQRSVLTEHQRIHTGERPYKCDECGNAFRGITSLIQHQRIHTGEKPYQCDECGKAFRQRKKTSYKEILLKNHSEPQAGVNLLLSSLIPEWQSCFRKDL</sequence>